<proteinExistence type="inferred from homology"/>
<feature type="chain" id="PRO_0000300177" description="tRNA(Met) cytidine acetate ligase">
    <location>
        <begin position="1"/>
        <end position="380"/>
    </location>
</feature>
<feature type="binding site" evidence="1">
    <location>
        <begin position="7"/>
        <end position="20"/>
    </location>
    <ligand>
        <name>ATP</name>
        <dbReference type="ChEBI" id="CHEBI:30616"/>
    </ligand>
</feature>
<feature type="binding site" evidence="1">
    <location>
        <position position="101"/>
    </location>
    <ligand>
        <name>ATP</name>
        <dbReference type="ChEBI" id="CHEBI:30616"/>
    </ligand>
</feature>
<feature type="binding site" evidence="1">
    <location>
        <position position="151"/>
    </location>
    <ligand>
        <name>ATP</name>
        <dbReference type="ChEBI" id="CHEBI:30616"/>
    </ligand>
</feature>
<feature type="binding site" evidence="1">
    <location>
        <position position="176"/>
    </location>
    <ligand>
        <name>ATP</name>
        <dbReference type="ChEBI" id="CHEBI:30616"/>
    </ligand>
</feature>
<evidence type="ECO:0000255" key="1">
    <source>
        <dbReference type="HAMAP-Rule" id="MF_01539"/>
    </source>
</evidence>
<protein>
    <recommendedName>
        <fullName evidence="1">tRNA(Met) cytidine acetate ligase</fullName>
        <ecNumber evidence="1">6.3.4.-</ecNumber>
    </recommendedName>
</protein>
<comment type="function">
    <text evidence="1">Catalyzes the formation of N(4)-acetylcytidine (ac(4)C) at the wobble position of elongator tRNA(Met), using acetate and ATP as substrates. First activates an acetate ion to form acetyladenylate (Ac-AMP) and then transfers the acetyl group to tRNA to form ac(4)C34.</text>
</comment>
<comment type="catalytic activity">
    <reaction evidence="1">
        <text>cytidine(34) in elongator tRNA(Met) + acetate + ATP = N(4)-acetylcytidine(34) in elongator tRNA(Met) + AMP + diphosphate</text>
        <dbReference type="Rhea" id="RHEA:58144"/>
        <dbReference type="Rhea" id="RHEA-COMP:10693"/>
        <dbReference type="Rhea" id="RHEA-COMP:10694"/>
        <dbReference type="ChEBI" id="CHEBI:30089"/>
        <dbReference type="ChEBI" id="CHEBI:30616"/>
        <dbReference type="ChEBI" id="CHEBI:33019"/>
        <dbReference type="ChEBI" id="CHEBI:74900"/>
        <dbReference type="ChEBI" id="CHEBI:82748"/>
        <dbReference type="ChEBI" id="CHEBI:456215"/>
    </reaction>
</comment>
<comment type="subcellular location">
    <subcellularLocation>
        <location evidence="1">Cytoplasm</location>
    </subcellularLocation>
</comment>
<comment type="similarity">
    <text evidence="1">Belongs to the TmcAL family.</text>
</comment>
<reference key="1">
    <citation type="journal article" date="2006" name="Proc. Natl. Acad. Sci. U.S.A.">
        <title>Multireplicon genome architecture of Lactobacillus salivarius.</title>
        <authorList>
            <person name="Claesson M.J."/>
            <person name="Li Y."/>
            <person name="Leahy S."/>
            <person name="Canchaya C."/>
            <person name="van Pijkeren J.P."/>
            <person name="Cerdeno-Tarraga A.M."/>
            <person name="Parkhill J."/>
            <person name="Flynn S."/>
            <person name="O'Sullivan G.C."/>
            <person name="Collins J.K."/>
            <person name="Higgins D."/>
            <person name="Shanahan F."/>
            <person name="Fitzgerald G.F."/>
            <person name="van Sinderen D."/>
            <person name="O'Toole P.W."/>
        </authorList>
    </citation>
    <scope>NUCLEOTIDE SEQUENCE [LARGE SCALE GENOMIC DNA]</scope>
    <source>
        <strain>UCC118</strain>
    </source>
</reference>
<sequence>MKIIGIIAEYNPFHNGHLYQIEKVKEIYPESIIIVAMSGNFLQRGEPAIVDKWVRAKQALLNGVDVVVEIPIAGCVQPADRFAENGVRILNNMGCEELFFGAEHAEYDFMTYAQLVQNLDSTEFSKKNISYAEAFQEAVAAKIGHNIDSPNDVLGLAYAKANLKFGKKLKLNPISRNVAGYHDKSLSPDSNIASATAIRKVLFSKDHNLVDKYLPSYQDLKDEKYISWDDFWPFLRYKLISSDIDELANIYGMAEGIQYRMKKKALELKVEATFDEWLKAVKSKRFTYTRLTRLSVATLVGMKVNDVSLYNKFPYVHLLGFTKNGQKALNIMKKNSEIPLLAKISQQDKDDFYHVDYRAGKIYQSQNYKEQDLKRAPLIF</sequence>
<organism>
    <name type="scientific">Ligilactobacillus salivarius (strain UCC118)</name>
    <name type="common">Lactobacillus salivarius</name>
    <dbReference type="NCBI Taxonomy" id="362948"/>
    <lineage>
        <taxon>Bacteria</taxon>
        <taxon>Bacillati</taxon>
        <taxon>Bacillota</taxon>
        <taxon>Bacilli</taxon>
        <taxon>Lactobacillales</taxon>
        <taxon>Lactobacillaceae</taxon>
        <taxon>Ligilactobacillus</taxon>
    </lineage>
</organism>
<keyword id="KW-0067">ATP-binding</keyword>
<keyword id="KW-0963">Cytoplasm</keyword>
<keyword id="KW-0436">Ligase</keyword>
<keyword id="KW-0547">Nucleotide-binding</keyword>
<keyword id="KW-1185">Reference proteome</keyword>
<keyword id="KW-0694">RNA-binding</keyword>
<keyword id="KW-0819">tRNA processing</keyword>
<keyword id="KW-0820">tRNA-binding</keyword>
<name>TMCAL_LIGS1</name>
<dbReference type="EC" id="6.3.4.-" evidence="1"/>
<dbReference type="EMBL" id="CP000233">
    <property type="protein sequence ID" value="ABD99314.1"/>
    <property type="molecule type" value="Genomic_DNA"/>
</dbReference>
<dbReference type="RefSeq" id="WP_011475793.1">
    <property type="nucleotide sequence ID" value="NC_007929.1"/>
</dbReference>
<dbReference type="RefSeq" id="YP_535397.1">
    <property type="nucleotide sequence ID" value="NC_007929.1"/>
</dbReference>
<dbReference type="SMR" id="Q1WUM1"/>
<dbReference type="STRING" id="362948.LSL_0505"/>
<dbReference type="KEGG" id="lsl:LSL_0505"/>
<dbReference type="PATRIC" id="fig|362948.14.peg.583"/>
<dbReference type="HOGENOM" id="CLU_038915_0_2_9"/>
<dbReference type="OrthoDB" id="9769796at2"/>
<dbReference type="Proteomes" id="UP000006559">
    <property type="component" value="Chromosome"/>
</dbReference>
<dbReference type="GO" id="GO:0005737">
    <property type="term" value="C:cytoplasm"/>
    <property type="evidence" value="ECO:0007669"/>
    <property type="project" value="UniProtKB-SubCell"/>
</dbReference>
<dbReference type="GO" id="GO:0005524">
    <property type="term" value="F:ATP binding"/>
    <property type="evidence" value="ECO:0007669"/>
    <property type="project" value="UniProtKB-KW"/>
</dbReference>
<dbReference type="GO" id="GO:0016879">
    <property type="term" value="F:ligase activity, forming carbon-nitrogen bonds"/>
    <property type="evidence" value="ECO:0007669"/>
    <property type="project" value="UniProtKB-UniRule"/>
</dbReference>
<dbReference type="GO" id="GO:0000049">
    <property type="term" value="F:tRNA binding"/>
    <property type="evidence" value="ECO:0007669"/>
    <property type="project" value="UniProtKB-KW"/>
</dbReference>
<dbReference type="GO" id="GO:0006400">
    <property type="term" value="P:tRNA modification"/>
    <property type="evidence" value="ECO:0007669"/>
    <property type="project" value="UniProtKB-UniRule"/>
</dbReference>
<dbReference type="Gene3D" id="3.40.50.620">
    <property type="entry name" value="HUPs"/>
    <property type="match status" value="1"/>
</dbReference>
<dbReference type="HAMAP" id="MF_01539">
    <property type="entry name" value="TmcAL"/>
    <property type="match status" value="1"/>
</dbReference>
<dbReference type="InterPro" id="IPR004821">
    <property type="entry name" value="Cyt_trans-like"/>
</dbReference>
<dbReference type="InterPro" id="IPR014729">
    <property type="entry name" value="Rossmann-like_a/b/a_fold"/>
</dbReference>
<dbReference type="InterPro" id="IPR008513">
    <property type="entry name" value="tRNA(Met)_cyd_acetate_ligase"/>
</dbReference>
<dbReference type="NCBIfam" id="TIGR00125">
    <property type="entry name" value="cyt_tran_rel"/>
    <property type="match status" value="1"/>
</dbReference>
<dbReference type="NCBIfam" id="NF010191">
    <property type="entry name" value="PRK13670.1"/>
    <property type="match status" value="1"/>
</dbReference>
<dbReference type="PANTHER" id="PTHR37825">
    <property type="entry name" value="TRNA(MET) CYTIDINE ACETATE LIGASE"/>
    <property type="match status" value="1"/>
</dbReference>
<dbReference type="PANTHER" id="PTHR37825:SF1">
    <property type="entry name" value="TRNA(MET) CYTIDINE ACETATE LIGASE"/>
    <property type="match status" value="1"/>
</dbReference>
<dbReference type="Pfam" id="PF05636">
    <property type="entry name" value="HIGH_NTase1"/>
    <property type="match status" value="1"/>
</dbReference>
<dbReference type="SUPFAM" id="SSF52374">
    <property type="entry name" value="Nucleotidylyl transferase"/>
    <property type="match status" value="1"/>
</dbReference>
<accession>Q1WUM1</accession>
<gene>
    <name evidence="1" type="primary">tmcAL</name>
    <name type="ordered locus">LSL_0505</name>
</gene>